<organism>
    <name type="scientific">Rickettsia rickettsii (strain Iowa)</name>
    <dbReference type="NCBI Taxonomy" id="452659"/>
    <lineage>
        <taxon>Bacteria</taxon>
        <taxon>Pseudomonadati</taxon>
        <taxon>Pseudomonadota</taxon>
        <taxon>Alphaproteobacteria</taxon>
        <taxon>Rickettsiales</taxon>
        <taxon>Rickettsiaceae</taxon>
        <taxon>Rickettsieae</taxon>
        <taxon>Rickettsia</taxon>
        <taxon>spotted fever group</taxon>
    </lineage>
</organism>
<reference key="1">
    <citation type="journal article" date="2008" name="Infect. Immun.">
        <title>Genomic comparison of virulent Rickettsia rickettsii Sheila Smith and avirulent Rickettsia rickettsii Iowa.</title>
        <authorList>
            <person name="Ellison D.W."/>
            <person name="Clark T.R."/>
            <person name="Sturdevant D.E."/>
            <person name="Virtaneva K."/>
            <person name="Porcella S.F."/>
            <person name="Hackstadt T."/>
        </authorList>
    </citation>
    <scope>NUCLEOTIDE SEQUENCE [LARGE SCALE GENOMIC DNA]</scope>
    <source>
        <strain>Iowa</strain>
    </source>
</reference>
<proteinExistence type="inferred from homology"/>
<accession>B0BXI2</accession>
<name>SYL_RICRO</name>
<keyword id="KW-0030">Aminoacyl-tRNA synthetase</keyword>
<keyword id="KW-0067">ATP-binding</keyword>
<keyword id="KW-0963">Cytoplasm</keyword>
<keyword id="KW-0436">Ligase</keyword>
<keyword id="KW-0547">Nucleotide-binding</keyword>
<keyword id="KW-0648">Protein biosynthesis</keyword>
<gene>
    <name evidence="1" type="primary">leuS</name>
    <name type="ordered locus">RrIowa_0700</name>
</gene>
<feature type="chain" id="PRO_1000074841" description="Leucine--tRNA ligase">
    <location>
        <begin position="1"/>
        <end position="835"/>
    </location>
</feature>
<feature type="short sequence motif" description="'HIGH' region">
    <location>
        <begin position="36"/>
        <end position="46"/>
    </location>
</feature>
<feature type="short sequence motif" description="'KMSKS' region">
    <location>
        <begin position="602"/>
        <end position="606"/>
    </location>
</feature>
<feature type="binding site" evidence="1">
    <location>
        <position position="605"/>
    </location>
    <ligand>
        <name>ATP</name>
        <dbReference type="ChEBI" id="CHEBI:30616"/>
    </ligand>
</feature>
<comment type="catalytic activity">
    <reaction evidence="1">
        <text>tRNA(Leu) + L-leucine + ATP = L-leucyl-tRNA(Leu) + AMP + diphosphate</text>
        <dbReference type="Rhea" id="RHEA:11688"/>
        <dbReference type="Rhea" id="RHEA-COMP:9613"/>
        <dbReference type="Rhea" id="RHEA-COMP:9622"/>
        <dbReference type="ChEBI" id="CHEBI:30616"/>
        <dbReference type="ChEBI" id="CHEBI:33019"/>
        <dbReference type="ChEBI" id="CHEBI:57427"/>
        <dbReference type="ChEBI" id="CHEBI:78442"/>
        <dbReference type="ChEBI" id="CHEBI:78494"/>
        <dbReference type="ChEBI" id="CHEBI:456215"/>
        <dbReference type="EC" id="6.1.1.4"/>
    </reaction>
</comment>
<comment type="subcellular location">
    <subcellularLocation>
        <location evidence="1">Cytoplasm</location>
    </subcellularLocation>
</comment>
<comment type="similarity">
    <text evidence="1">Belongs to the class-I aminoacyl-tRNA synthetase family.</text>
</comment>
<dbReference type="EC" id="6.1.1.4" evidence="1"/>
<dbReference type="EMBL" id="CP000766">
    <property type="protein sequence ID" value="ABY72558.1"/>
    <property type="molecule type" value="Genomic_DNA"/>
</dbReference>
<dbReference type="RefSeq" id="WP_012150778.1">
    <property type="nucleotide sequence ID" value="NC_010263.3"/>
</dbReference>
<dbReference type="SMR" id="B0BXI2"/>
<dbReference type="GeneID" id="79937331"/>
<dbReference type="KEGG" id="rrj:RrIowa_0700"/>
<dbReference type="eggNOG" id="COG0495">
    <property type="taxonomic scope" value="Bacteria"/>
</dbReference>
<dbReference type="HOGENOM" id="CLU_004427_0_0_5"/>
<dbReference type="Proteomes" id="UP000000796">
    <property type="component" value="Chromosome"/>
</dbReference>
<dbReference type="GO" id="GO:0005737">
    <property type="term" value="C:cytoplasm"/>
    <property type="evidence" value="ECO:0007669"/>
    <property type="project" value="UniProtKB-SubCell"/>
</dbReference>
<dbReference type="GO" id="GO:0002161">
    <property type="term" value="F:aminoacyl-tRNA deacylase activity"/>
    <property type="evidence" value="ECO:0007669"/>
    <property type="project" value="InterPro"/>
</dbReference>
<dbReference type="GO" id="GO:0005524">
    <property type="term" value="F:ATP binding"/>
    <property type="evidence" value="ECO:0007669"/>
    <property type="project" value="UniProtKB-UniRule"/>
</dbReference>
<dbReference type="GO" id="GO:0004823">
    <property type="term" value="F:leucine-tRNA ligase activity"/>
    <property type="evidence" value="ECO:0007669"/>
    <property type="project" value="UniProtKB-UniRule"/>
</dbReference>
<dbReference type="GO" id="GO:0006429">
    <property type="term" value="P:leucyl-tRNA aminoacylation"/>
    <property type="evidence" value="ECO:0007669"/>
    <property type="project" value="UniProtKB-UniRule"/>
</dbReference>
<dbReference type="CDD" id="cd07958">
    <property type="entry name" value="Anticodon_Ia_Leu_BEm"/>
    <property type="match status" value="1"/>
</dbReference>
<dbReference type="CDD" id="cd00812">
    <property type="entry name" value="LeuRS_core"/>
    <property type="match status" value="1"/>
</dbReference>
<dbReference type="FunFam" id="1.10.730.10:FF:000081">
    <property type="entry name" value="Leucine--tRNA ligase"/>
    <property type="match status" value="1"/>
</dbReference>
<dbReference type="FunFam" id="3.10.20.590:FF:000001">
    <property type="entry name" value="Leucine--tRNA ligase"/>
    <property type="match status" value="1"/>
</dbReference>
<dbReference type="FunFam" id="3.40.50.620:FF:000003">
    <property type="entry name" value="Leucine--tRNA ligase"/>
    <property type="match status" value="1"/>
</dbReference>
<dbReference type="FunFam" id="3.40.50.620:FF:000051">
    <property type="entry name" value="Leucine--tRNA ligase"/>
    <property type="match status" value="1"/>
</dbReference>
<dbReference type="Gene3D" id="2.20.28.290">
    <property type="match status" value="1"/>
</dbReference>
<dbReference type="Gene3D" id="3.10.20.590">
    <property type="match status" value="1"/>
</dbReference>
<dbReference type="Gene3D" id="3.40.50.620">
    <property type="entry name" value="HUPs"/>
    <property type="match status" value="2"/>
</dbReference>
<dbReference type="Gene3D" id="1.10.730.10">
    <property type="entry name" value="Isoleucyl-tRNA Synthetase, Domain 1"/>
    <property type="match status" value="1"/>
</dbReference>
<dbReference type="HAMAP" id="MF_00049_B">
    <property type="entry name" value="Leu_tRNA_synth_B"/>
    <property type="match status" value="1"/>
</dbReference>
<dbReference type="InterPro" id="IPR001412">
    <property type="entry name" value="aa-tRNA-synth_I_CS"/>
</dbReference>
<dbReference type="InterPro" id="IPR002300">
    <property type="entry name" value="aa-tRNA-synth_Ia"/>
</dbReference>
<dbReference type="InterPro" id="IPR002302">
    <property type="entry name" value="Leu-tRNA-ligase"/>
</dbReference>
<dbReference type="InterPro" id="IPR025709">
    <property type="entry name" value="Leu_tRNA-synth_edit"/>
</dbReference>
<dbReference type="InterPro" id="IPR013155">
    <property type="entry name" value="M/V/L/I-tRNA-synth_anticd-bd"/>
</dbReference>
<dbReference type="InterPro" id="IPR015413">
    <property type="entry name" value="Methionyl/Leucyl_tRNA_Synth"/>
</dbReference>
<dbReference type="InterPro" id="IPR014729">
    <property type="entry name" value="Rossmann-like_a/b/a_fold"/>
</dbReference>
<dbReference type="InterPro" id="IPR009080">
    <property type="entry name" value="tRNAsynth_Ia_anticodon-bd"/>
</dbReference>
<dbReference type="InterPro" id="IPR009008">
    <property type="entry name" value="Val/Leu/Ile-tRNA-synth_edit"/>
</dbReference>
<dbReference type="NCBIfam" id="TIGR00396">
    <property type="entry name" value="leuS_bact"/>
    <property type="match status" value="1"/>
</dbReference>
<dbReference type="PANTHER" id="PTHR43740:SF2">
    <property type="entry name" value="LEUCINE--TRNA LIGASE, MITOCHONDRIAL"/>
    <property type="match status" value="1"/>
</dbReference>
<dbReference type="PANTHER" id="PTHR43740">
    <property type="entry name" value="LEUCYL-TRNA SYNTHETASE"/>
    <property type="match status" value="1"/>
</dbReference>
<dbReference type="Pfam" id="PF08264">
    <property type="entry name" value="Anticodon_1"/>
    <property type="match status" value="1"/>
</dbReference>
<dbReference type="Pfam" id="PF00133">
    <property type="entry name" value="tRNA-synt_1"/>
    <property type="match status" value="2"/>
</dbReference>
<dbReference type="Pfam" id="PF13603">
    <property type="entry name" value="tRNA-synt_1_2"/>
    <property type="match status" value="1"/>
</dbReference>
<dbReference type="Pfam" id="PF09334">
    <property type="entry name" value="tRNA-synt_1g"/>
    <property type="match status" value="1"/>
</dbReference>
<dbReference type="PRINTS" id="PR00985">
    <property type="entry name" value="TRNASYNTHLEU"/>
</dbReference>
<dbReference type="SUPFAM" id="SSF47323">
    <property type="entry name" value="Anticodon-binding domain of a subclass of class I aminoacyl-tRNA synthetases"/>
    <property type="match status" value="1"/>
</dbReference>
<dbReference type="SUPFAM" id="SSF52374">
    <property type="entry name" value="Nucleotidylyl transferase"/>
    <property type="match status" value="1"/>
</dbReference>
<dbReference type="SUPFAM" id="SSF50677">
    <property type="entry name" value="ValRS/IleRS/LeuRS editing domain"/>
    <property type="match status" value="1"/>
</dbReference>
<dbReference type="PROSITE" id="PS00178">
    <property type="entry name" value="AA_TRNA_LIGASE_I"/>
    <property type="match status" value="1"/>
</dbReference>
<protein>
    <recommendedName>
        <fullName evidence="1">Leucine--tRNA ligase</fullName>
        <ecNumber evidence="1">6.1.1.4</ecNumber>
    </recommendedName>
    <alternativeName>
        <fullName evidence="1">Leucyl-tRNA synthetase</fullName>
        <shortName evidence="1">LeuRS</shortName>
    </alternativeName>
</protein>
<evidence type="ECO:0000255" key="1">
    <source>
        <dbReference type="HAMAP-Rule" id="MF_00049"/>
    </source>
</evidence>
<sequence length="835" mass="96663">MNQIEQKWQYIWQEEKAFEVSNASSKPKYYVLEMLPYPSGKIHVGHVRNYSIGDVIARFMTMQGFNVLHPMGWDAFGLPAENAAINNNSHPKKWTYSNIKNMKKQLKSMGFSYDWSREINSCDPEYYKHEQKFFLELYERNLAYQKESFVNWDPVDNTVLANEQVVDGRGWRSGAIVAKRYLKQWFLKITDYAEELLNEIQNLKEWPEAVRSMQEKWIGKSIGANFHFKIKDNEETTIEVFSTKPETIFGASFIGIAFNHPIIERLVSKTPEILAFITQCSHITRSSKLEKAEKEGVFTGLFVTHPFDSNIVLPVIITNFVLMDYGTGAIFGCPAHDECDHELAVKMNLSIKQVIKADMDVQKTAYTEDGILINSDFLNGLTSNEAKQEVIREFEKLGIGKRSVNYRLKDWGISRQRFWGCPIPMIHCEICGIVPVPYKDLPVTLPDDVNFDGHGNPLDHHPSWKHVNCPKCDKPAVRETDTFDTFFESSWYFMRYCNSNATEMTDKKACDYWLPVDKYIGGIEHAVMHLLYARFFTKVMNEQNYVSVQEPFKGLFTQGMVLHATYKDEHNNWLYPEEVVKKGNEFFHKESNNRVVQGRIEKMSKSKKNLIDLETMQEQYGADAIRLFVLSDSPPEKDLEWSASGIEGCSRFINKLEYMFKAIDSLKDDVNSEVNKELNRLVHFTIKHVAEDIKHFALNRAIARMRELSNSISAEISKDKIDVKTVRHGFNVLVQLLNPFIPHITEEIWQKLGNKERLYNLSFPAFDESMLELDTYIMAVQVNGKLRDTYEFKTSVSEDEIKQVTVSLPKVQKFLEGKEPKKIILVPRKIVNILV</sequence>